<sequence length="118" mass="13613">MSTEPSKTLETFENPNPERDYTIRMEIPEFTCLCPKTGQPDFATLNLEYIPERHCVELKSLKLYIWSYRDVGGFHEALTNQILGDLVAATQPRYMKLTAHFNVRGGIWTTVEAEHHGR</sequence>
<gene>
    <name evidence="1" type="primary">queF</name>
    <name type="ordered locus">Hhal_1881</name>
</gene>
<feature type="chain" id="PRO_1000062386" description="NADPH-dependent 7-cyano-7-deazaguanine reductase">
    <location>
        <begin position="1"/>
        <end position="118"/>
    </location>
</feature>
<feature type="active site" description="Thioimide intermediate" evidence="1">
    <location>
        <position position="34"/>
    </location>
</feature>
<feature type="active site" description="Proton donor" evidence="1">
    <location>
        <position position="41"/>
    </location>
</feature>
<feature type="binding site" evidence="1">
    <location>
        <begin position="56"/>
        <end position="58"/>
    </location>
    <ligand>
        <name>substrate</name>
    </ligand>
</feature>
<feature type="binding site" evidence="1">
    <location>
        <begin position="75"/>
        <end position="76"/>
    </location>
    <ligand>
        <name>substrate</name>
    </ligand>
</feature>
<reference key="1">
    <citation type="submission" date="2006-12" db="EMBL/GenBank/DDBJ databases">
        <title>Complete sequence of Halorhodospira halophila SL1.</title>
        <authorList>
            <consortium name="US DOE Joint Genome Institute"/>
            <person name="Copeland A."/>
            <person name="Lucas S."/>
            <person name="Lapidus A."/>
            <person name="Barry K."/>
            <person name="Detter J.C."/>
            <person name="Glavina del Rio T."/>
            <person name="Hammon N."/>
            <person name="Israni S."/>
            <person name="Dalin E."/>
            <person name="Tice H."/>
            <person name="Pitluck S."/>
            <person name="Saunders E."/>
            <person name="Brettin T."/>
            <person name="Bruce D."/>
            <person name="Han C."/>
            <person name="Tapia R."/>
            <person name="Schmutz J."/>
            <person name="Larimer F."/>
            <person name="Land M."/>
            <person name="Hauser L."/>
            <person name="Kyrpides N."/>
            <person name="Mikhailova N."/>
            <person name="Hoff W."/>
            <person name="Richardson P."/>
        </authorList>
    </citation>
    <scope>NUCLEOTIDE SEQUENCE [LARGE SCALE GENOMIC DNA]</scope>
    <source>
        <strain>DSM 244 / SL1</strain>
    </source>
</reference>
<accession>A1WY83</accession>
<dbReference type="EC" id="1.7.1.13" evidence="1"/>
<dbReference type="EMBL" id="CP000544">
    <property type="protein sequence ID" value="ABM62645.1"/>
    <property type="molecule type" value="Genomic_DNA"/>
</dbReference>
<dbReference type="RefSeq" id="WP_011814667.1">
    <property type="nucleotide sequence ID" value="NC_008789.1"/>
</dbReference>
<dbReference type="SMR" id="A1WY83"/>
<dbReference type="STRING" id="349124.Hhal_1881"/>
<dbReference type="KEGG" id="hha:Hhal_1881"/>
<dbReference type="eggNOG" id="COG0780">
    <property type="taxonomic scope" value="Bacteria"/>
</dbReference>
<dbReference type="HOGENOM" id="CLU_102489_1_0_6"/>
<dbReference type="OrthoDB" id="9789995at2"/>
<dbReference type="UniPathway" id="UPA00392"/>
<dbReference type="Proteomes" id="UP000000647">
    <property type="component" value="Chromosome"/>
</dbReference>
<dbReference type="GO" id="GO:0005737">
    <property type="term" value="C:cytoplasm"/>
    <property type="evidence" value="ECO:0007669"/>
    <property type="project" value="UniProtKB-SubCell"/>
</dbReference>
<dbReference type="GO" id="GO:0033739">
    <property type="term" value="F:preQ1 synthase activity"/>
    <property type="evidence" value="ECO:0007669"/>
    <property type="project" value="UniProtKB-UniRule"/>
</dbReference>
<dbReference type="GO" id="GO:0008616">
    <property type="term" value="P:queuosine biosynthetic process"/>
    <property type="evidence" value="ECO:0007669"/>
    <property type="project" value="UniProtKB-UniRule"/>
</dbReference>
<dbReference type="GO" id="GO:0006400">
    <property type="term" value="P:tRNA modification"/>
    <property type="evidence" value="ECO:0007669"/>
    <property type="project" value="UniProtKB-UniRule"/>
</dbReference>
<dbReference type="Gene3D" id="3.30.1130.10">
    <property type="match status" value="1"/>
</dbReference>
<dbReference type="HAMAP" id="MF_00818">
    <property type="entry name" value="QueF_type1"/>
    <property type="match status" value="1"/>
</dbReference>
<dbReference type="InterPro" id="IPR043133">
    <property type="entry name" value="GTP-CH-I_C/QueF"/>
</dbReference>
<dbReference type="InterPro" id="IPR050084">
    <property type="entry name" value="NADPH_dep_7-cyano-7-deazaG_red"/>
</dbReference>
<dbReference type="InterPro" id="IPR029500">
    <property type="entry name" value="QueF"/>
</dbReference>
<dbReference type="InterPro" id="IPR016856">
    <property type="entry name" value="QueF_type1"/>
</dbReference>
<dbReference type="NCBIfam" id="TIGR03139">
    <property type="entry name" value="QueF-II"/>
    <property type="match status" value="1"/>
</dbReference>
<dbReference type="PANTHER" id="PTHR34354">
    <property type="entry name" value="NADPH-DEPENDENT 7-CYANO-7-DEAZAGUANINE REDUCTASE"/>
    <property type="match status" value="1"/>
</dbReference>
<dbReference type="PANTHER" id="PTHR34354:SF1">
    <property type="entry name" value="NADPH-DEPENDENT 7-CYANO-7-DEAZAGUANINE REDUCTASE"/>
    <property type="match status" value="1"/>
</dbReference>
<dbReference type="Pfam" id="PF14489">
    <property type="entry name" value="QueF"/>
    <property type="match status" value="1"/>
</dbReference>
<dbReference type="PIRSF" id="PIRSF027377">
    <property type="entry name" value="Nitrile_oxidored_QueF"/>
    <property type="match status" value="1"/>
</dbReference>
<dbReference type="SUPFAM" id="SSF55620">
    <property type="entry name" value="Tetrahydrobiopterin biosynthesis enzymes-like"/>
    <property type="match status" value="1"/>
</dbReference>
<protein>
    <recommendedName>
        <fullName evidence="1">NADPH-dependent 7-cyano-7-deazaguanine reductase</fullName>
        <ecNumber evidence="1">1.7.1.13</ecNumber>
    </recommendedName>
    <alternativeName>
        <fullName evidence="1">7-cyano-7-carbaguanine reductase</fullName>
    </alternativeName>
    <alternativeName>
        <fullName evidence="1">NADPH-dependent nitrile oxidoreductase</fullName>
    </alternativeName>
    <alternativeName>
        <fullName evidence="1">PreQ(0) reductase</fullName>
    </alternativeName>
</protein>
<comment type="function">
    <text evidence="1">Catalyzes the NADPH-dependent reduction of 7-cyano-7-deazaguanine (preQ0) to 7-aminomethyl-7-deazaguanine (preQ1).</text>
</comment>
<comment type="catalytic activity">
    <reaction evidence="1">
        <text>7-aminomethyl-7-carbaguanine + 2 NADP(+) = 7-cyano-7-deazaguanine + 2 NADPH + 3 H(+)</text>
        <dbReference type="Rhea" id="RHEA:13409"/>
        <dbReference type="ChEBI" id="CHEBI:15378"/>
        <dbReference type="ChEBI" id="CHEBI:45075"/>
        <dbReference type="ChEBI" id="CHEBI:57783"/>
        <dbReference type="ChEBI" id="CHEBI:58349"/>
        <dbReference type="ChEBI" id="CHEBI:58703"/>
        <dbReference type="EC" id="1.7.1.13"/>
    </reaction>
</comment>
<comment type="pathway">
    <text evidence="1">tRNA modification; tRNA-queuosine biosynthesis.</text>
</comment>
<comment type="subcellular location">
    <subcellularLocation>
        <location evidence="1">Cytoplasm</location>
    </subcellularLocation>
</comment>
<comment type="similarity">
    <text evidence="1">Belongs to the GTP cyclohydrolase I family. QueF type 1 subfamily.</text>
</comment>
<proteinExistence type="inferred from homology"/>
<name>QUEF_HALHL</name>
<organism>
    <name type="scientific">Halorhodospira halophila (strain DSM 244 / SL1)</name>
    <name type="common">Ectothiorhodospira halophila (strain DSM 244 / SL1)</name>
    <dbReference type="NCBI Taxonomy" id="349124"/>
    <lineage>
        <taxon>Bacteria</taxon>
        <taxon>Pseudomonadati</taxon>
        <taxon>Pseudomonadota</taxon>
        <taxon>Gammaproteobacteria</taxon>
        <taxon>Chromatiales</taxon>
        <taxon>Ectothiorhodospiraceae</taxon>
        <taxon>Halorhodospira</taxon>
    </lineage>
</organism>
<evidence type="ECO:0000255" key="1">
    <source>
        <dbReference type="HAMAP-Rule" id="MF_00818"/>
    </source>
</evidence>
<keyword id="KW-0963">Cytoplasm</keyword>
<keyword id="KW-0521">NADP</keyword>
<keyword id="KW-0560">Oxidoreductase</keyword>
<keyword id="KW-0671">Queuosine biosynthesis</keyword>
<keyword id="KW-1185">Reference proteome</keyword>